<reference key="1">
    <citation type="journal article" date="1990" name="Peptides">
        <title>Isolation, identification and synthesis of locustamyotropin (Lom-MT), a novel biologically active insect peptide.</title>
        <authorList>
            <person name="Schoofs L."/>
            <person name="Holman G.M."/>
            <person name="Hayes T.K."/>
            <person name="Tips A."/>
            <person name="Nachman R.J."/>
            <person name="Vandesande F."/>
            <person name="de Loof A."/>
        </authorList>
    </citation>
    <scope>PROTEIN SEQUENCE</scope>
    <scope>AMIDATION AT LEU-12</scope>
    <scope>FUNCTION</scope>
    <source>
        <tissue>Corpora cardiaca</tissue>
    </source>
</reference>
<protein>
    <recommendedName>
        <fullName>Locustamyotropin-1</fullName>
    </recommendedName>
    <alternativeName>
        <fullName>Lom-MT-1</fullName>
    </alternativeName>
</protein>
<keyword id="KW-0027">Amidation</keyword>
<keyword id="KW-0903">Direct protein sequencing</keyword>
<keyword id="KW-0527">Neuropeptide</keyword>
<keyword id="KW-0964">Secreted</keyword>
<name>LMT1_LOCMI</name>
<comment type="function">
    <text evidence="1">Mediates visceral muscle contractile activity (myotropic activity).</text>
</comment>
<comment type="subcellular location">
    <subcellularLocation>
        <location>Secreted</location>
    </subcellularLocation>
</comment>
<comment type="similarity">
    <text evidence="2">Belongs to the pyrokinin family.</text>
</comment>
<organism>
    <name type="scientific">Locusta migratoria</name>
    <name type="common">Migratory locust</name>
    <dbReference type="NCBI Taxonomy" id="7004"/>
    <lineage>
        <taxon>Eukaryota</taxon>
        <taxon>Metazoa</taxon>
        <taxon>Ecdysozoa</taxon>
        <taxon>Arthropoda</taxon>
        <taxon>Hexapoda</taxon>
        <taxon>Insecta</taxon>
        <taxon>Pterygota</taxon>
        <taxon>Neoptera</taxon>
        <taxon>Polyneoptera</taxon>
        <taxon>Orthoptera</taxon>
        <taxon>Caelifera</taxon>
        <taxon>Acrididea</taxon>
        <taxon>Acridomorpha</taxon>
        <taxon>Acridoidea</taxon>
        <taxon>Acrididae</taxon>
        <taxon>Oedipodinae</taxon>
        <taxon>Locusta</taxon>
    </lineage>
</organism>
<accession>P22395</accession>
<dbReference type="PIR" id="A43975">
    <property type="entry name" value="A43975"/>
</dbReference>
<dbReference type="GO" id="GO:0005576">
    <property type="term" value="C:extracellular region"/>
    <property type="evidence" value="ECO:0007669"/>
    <property type="project" value="UniProtKB-SubCell"/>
</dbReference>
<dbReference type="GO" id="GO:0007218">
    <property type="term" value="P:neuropeptide signaling pathway"/>
    <property type="evidence" value="ECO:0007669"/>
    <property type="project" value="UniProtKB-KW"/>
</dbReference>
<dbReference type="PROSITE" id="PS00539">
    <property type="entry name" value="PYROKININ"/>
    <property type="match status" value="1"/>
</dbReference>
<proteinExistence type="evidence at protein level"/>
<feature type="peptide" id="PRO_0000044313" description="Locustamyotropin-1">
    <location>
        <begin position="1"/>
        <end position="12"/>
    </location>
</feature>
<feature type="modified residue" description="Leucine amide" evidence="1">
    <location>
        <position position="12"/>
    </location>
</feature>
<sequence length="12" mass="1213">GAVPAAQFSPRL</sequence>
<evidence type="ECO:0000269" key="1">
    <source>
    </source>
</evidence>
<evidence type="ECO:0000305" key="2"/>